<evidence type="ECO:0000255" key="1">
    <source>
        <dbReference type="HAMAP-Rule" id="MF_01856"/>
    </source>
</evidence>
<organism>
    <name type="scientific">Yersinia pseudotuberculosis serotype O:3 (strain YPIII)</name>
    <dbReference type="NCBI Taxonomy" id="502800"/>
    <lineage>
        <taxon>Bacteria</taxon>
        <taxon>Pseudomonadati</taxon>
        <taxon>Pseudomonadota</taxon>
        <taxon>Gammaproteobacteria</taxon>
        <taxon>Enterobacterales</taxon>
        <taxon>Yersiniaceae</taxon>
        <taxon>Yersinia</taxon>
    </lineage>
</organism>
<comment type="function">
    <text evidence="1">Specifically methylates the cytosine at position 967 (m5C967) of 16S rRNA.</text>
</comment>
<comment type="catalytic activity">
    <reaction evidence="1">
        <text>cytidine(967) in 16S rRNA + S-adenosyl-L-methionine = 5-methylcytidine(967) in 16S rRNA + S-adenosyl-L-homocysteine + H(+)</text>
        <dbReference type="Rhea" id="RHEA:42748"/>
        <dbReference type="Rhea" id="RHEA-COMP:10219"/>
        <dbReference type="Rhea" id="RHEA-COMP:10220"/>
        <dbReference type="ChEBI" id="CHEBI:15378"/>
        <dbReference type="ChEBI" id="CHEBI:57856"/>
        <dbReference type="ChEBI" id="CHEBI:59789"/>
        <dbReference type="ChEBI" id="CHEBI:74483"/>
        <dbReference type="ChEBI" id="CHEBI:82748"/>
        <dbReference type="EC" id="2.1.1.176"/>
    </reaction>
</comment>
<comment type="subcellular location">
    <subcellularLocation>
        <location evidence="1">Cytoplasm</location>
    </subcellularLocation>
</comment>
<comment type="similarity">
    <text evidence="1">Belongs to the class I-like SAM-binding methyltransferase superfamily. RsmB/NOP family.</text>
</comment>
<feature type="chain" id="PRO_0000366190" description="Ribosomal RNA small subunit methyltransferase B">
    <location>
        <begin position="1"/>
        <end position="429"/>
    </location>
</feature>
<feature type="active site" description="Nucleophile" evidence="1">
    <location>
        <position position="375"/>
    </location>
</feature>
<feature type="binding site" evidence="1">
    <location>
        <begin position="254"/>
        <end position="260"/>
    </location>
    <ligand>
        <name>S-adenosyl-L-methionine</name>
        <dbReference type="ChEBI" id="CHEBI:59789"/>
    </ligand>
</feature>
<feature type="binding site" evidence="1">
    <location>
        <position position="277"/>
    </location>
    <ligand>
        <name>S-adenosyl-L-methionine</name>
        <dbReference type="ChEBI" id="CHEBI:59789"/>
    </ligand>
</feature>
<feature type="binding site" evidence="1">
    <location>
        <position position="303"/>
    </location>
    <ligand>
        <name>S-adenosyl-L-methionine</name>
        <dbReference type="ChEBI" id="CHEBI:59789"/>
    </ligand>
</feature>
<feature type="binding site" evidence="1">
    <location>
        <position position="322"/>
    </location>
    <ligand>
        <name>S-adenosyl-L-methionine</name>
        <dbReference type="ChEBI" id="CHEBI:59789"/>
    </ligand>
</feature>
<accession>B1JJH6</accession>
<dbReference type="EC" id="2.1.1.176" evidence="1"/>
<dbReference type="EMBL" id="CP000950">
    <property type="protein sequence ID" value="ACA66627.1"/>
    <property type="molecule type" value="Genomic_DNA"/>
</dbReference>
<dbReference type="RefSeq" id="WP_002215705.1">
    <property type="nucleotide sequence ID" value="NZ_CP009792.1"/>
</dbReference>
<dbReference type="SMR" id="B1JJH6"/>
<dbReference type="GeneID" id="57974364"/>
<dbReference type="KEGG" id="ypy:YPK_0314"/>
<dbReference type="PATRIC" id="fig|502800.11.peg.921"/>
<dbReference type="GO" id="GO:0005829">
    <property type="term" value="C:cytosol"/>
    <property type="evidence" value="ECO:0007669"/>
    <property type="project" value="TreeGrafter"/>
</dbReference>
<dbReference type="GO" id="GO:0003723">
    <property type="term" value="F:RNA binding"/>
    <property type="evidence" value="ECO:0007669"/>
    <property type="project" value="UniProtKB-KW"/>
</dbReference>
<dbReference type="GO" id="GO:0009383">
    <property type="term" value="F:rRNA (cytosine-C5-)-methyltransferase activity"/>
    <property type="evidence" value="ECO:0007669"/>
    <property type="project" value="TreeGrafter"/>
</dbReference>
<dbReference type="GO" id="GO:0006355">
    <property type="term" value="P:regulation of DNA-templated transcription"/>
    <property type="evidence" value="ECO:0007669"/>
    <property type="project" value="InterPro"/>
</dbReference>
<dbReference type="GO" id="GO:0070475">
    <property type="term" value="P:rRNA base methylation"/>
    <property type="evidence" value="ECO:0007669"/>
    <property type="project" value="TreeGrafter"/>
</dbReference>
<dbReference type="CDD" id="cd02440">
    <property type="entry name" value="AdoMet_MTases"/>
    <property type="match status" value="1"/>
</dbReference>
<dbReference type="CDD" id="cd00620">
    <property type="entry name" value="Methyltransferase_Sun"/>
    <property type="match status" value="1"/>
</dbReference>
<dbReference type="FunFam" id="1.10.287.730:FF:000001">
    <property type="entry name" value="Ribosomal RNA small subunit methyltransferase B"/>
    <property type="match status" value="1"/>
</dbReference>
<dbReference type="FunFam" id="1.10.940.10:FF:000002">
    <property type="entry name" value="Ribosomal RNA small subunit methyltransferase B"/>
    <property type="match status" value="1"/>
</dbReference>
<dbReference type="FunFam" id="3.30.70.1170:FF:000002">
    <property type="entry name" value="Ribosomal RNA small subunit methyltransferase B"/>
    <property type="match status" value="1"/>
</dbReference>
<dbReference type="FunFam" id="3.40.50.150:FF:000022">
    <property type="entry name" value="Ribosomal RNA small subunit methyltransferase B"/>
    <property type="match status" value="1"/>
</dbReference>
<dbReference type="Gene3D" id="1.10.287.730">
    <property type="entry name" value="Helix hairpin bin"/>
    <property type="match status" value="1"/>
</dbReference>
<dbReference type="Gene3D" id="1.10.940.10">
    <property type="entry name" value="NusB-like"/>
    <property type="match status" value="1"/>
</dbReference>
<dbReference type="Gene3D" id="3.30.70.1170">
    <property type="entry name" value="Sun protein, domain 3"/>
    <property type="match status" value="1"/>
</dbReference>
<dbReference type="Gene3D" id="3.40.50.150">
    <property type="entry name" value="Vaccinia Virus protein VP39"/>
    <property type="match status" value="1"/>
</dbReference>
<dbReference type="HAMAP" id="MF_01856">
    <property type="entry name" value="16SrRNA_methyltr_B"/>
    <property type="match status" value="1"/>
</dbReference>
<dbReference type="InterPro" id="IPR049560">
    <property type="entry name" value="MeTrfase_RsmB-F_NOP2_cat"/>
</dbReference>
<dbReference type="InterPro" id="IPR001678">
    <property type="entry name" value="MeTrfase_RsmB-F_NOP2_dom"/>
</dbReference>
<dbReference type="InterPro" id="IPR035926">
    <property type="entry name" value="NusB-like_sf"/>
</dbReference>
<dbReference type="InterPro" id="IPR006027">
    <property type="entry name" value="NusB_RsmB_TIM44"/>
</dbReference>
<dbReference type="InterPro" id="IPR023267">
    <property type="entry name" value="RCMT"/>
</dbReference>
<dbReference type="InterPro" id="IPR004573">
    <property type="entry name" value="rRNA_ssu_MeTfrase_B"/>
</dbReference>
<dbReference type="InterPro" id="IPR023541">
    <property type="entry name" value="rRNA_ssu_MeTfrase_B_ent"/>
</dbReference>
<dbReference type="InterPro" id="IPR054728">
    <property type="entry name" value="RsmB-like_ferredoxin"/>
</dbReference>
<dbReference type="InterPro" id="IPR048019">
    <property type="entry name" value="RsmB-like_N"/>
</dbReference>
<dbReference type="InterPro" id="IPR018314">
    <property type="entry name" value="RsmB/NOL1/NOP2-like_CS"/>
</dbReference>
<dbReference type="InterPro" id="IPR029063">
    <property type="entry name" value="SAM-dependent_MTases_sf"/>
</dbReference>
<dbReference type="NCBIfam" id="NF008149">
    <property type="entry name" value="PRK10901.1"/>
    <property type="match status" value="1"/>
</dbReference>
<dbReference type="NCBIfam" id="NF011494">
    <property type="entry name" value="PRK14902.1"/>
    <property type="match status" value="1"/>
</dbReference>
<dbReference type="NCBIfam" id="TIGR00563">
    <property type="entry name" value="rsmB"/>
    <property type="match status" value="1"/>
</dbReference>
<dbReference type="PANTHER" id="PTHR22807:SF61">
    <property type="entry name" value="NOL1_NOP2_SUN FAMILY PROTEIN _ ANTITERMINATION NUSB DOMAIN-CONTAINING PROTEIN"/>
    <property type="match status" value="1"/>
</dbReference>
<dbReference type="PANTHER" id="PTHR22807">
    <property type="entry name" value="NOP2 YEAST -RELATED NOL1/NOP2/FMU SUN DOMAIN-CONTAINING"/>
    <property type="match status" value="1"/>
</dbReference>
<dbReference type="Pfam" id="PF01189">
    <property type="entry name" value="Methyltr_RsmB-F"/>
    <property type="match status" value="1"/>
</dbReference>
<dbReference type="Pfam" id="PF01029">
    <property type="entry name" value="NusB"/>
    <property type="match status" value="1"/>
</dbReference>
<dbReference type="Pfam" id="PF22458">
    <property type="entry name" value="RsmF-B_ferredox"/>
    <property type="match status" value="1"/>
</dbReference>
<dbReference type="PRINTS" id="PR02008">
    <property type="entry name" value="RCMTFAMILY"/>
</dbReference>
<dbReference type="SUPFAM" id="SSF48013">
    <property type="entry name" value="NusB-like"/>
    <property type="match status" value="1"/>
</dbReference>
<dbReference type="SUPFAM" id="SSF53335">
    <property type="entry name" value="S-adenosyl-L-methionine-dependent methyltransferases"/>
    <property type="match status" value="1"/>
</dbReference>
<dbReference type="PROSITE" id="PS01153">
    <property type="entry name" value="NOL1_NOP2_SUN"/>
    <property type="match status" value="1"/>
</dbReference>
<dbReference type="PROSITE" id="PS51686">
    <property type="entry name" value="SAM_MT_RSMB_NOP"/>
    <property type="match status" value="1"/>
</dbReference>
<name>RSMB_YERPY</name>
<proteinExistence type="inferred from homology"/>
<gene>
    <name evidence="1" type="primary">rsmB</name>
    <name evidence="1" type="synonym">sun</name>
    <name type="ordered locus">YPK_0314</name>
</gene>
<sequence>MKNTYNLRSIAAKAISQVLDQGQSLSAVLPELQKNISDKDRALLQELCFGTLRVLPQLEWCIQQLMARPMTGKQRVFHYLIMVGLYQLIYTRIPPHAALAETVEGATVLKRPQLKGLINGVLRQFQRQQVELLERAVNNDSHYLHPSWLLARIKQAYPAQWQQILDANNQRPPMWLRVNRLHHSRSEYLELLTQADINAEPHPIYRDAVRLITPCAVNHLPGFELGWVTVQDASAQGCVDLLDPQNGEQILDLCAAPGGKTTHILEAAPKAHVLAVDIDEQRLSRVKENLQRLQLQAVVRVGDGRAPDTWCGDQQFDRILLDAPCSATGVIRRHPDIKWLRRDRDISELAQLQSEIIEAIWPKLKHGGVLVYATCSILPEENQQQIAAFLQRHPEAQLTETGTTAAPGKQNLPHPEDGDGFFYAKIIKK</sequence>
<keyword id="KW-0963">Cytoplasm</keyword>
<keyword id="KW-0489">Methyltransferase</keyword>
<keyword id="KW-0694">RNA-binding</keyword>
<keyword id="KW-0698">rRNA processing</keyword>
<keyword id="KW-0949">S-adenosyl-L-methionine</keyword>
<keyword id="KW-0808">Transferase</keyword>
<reference key="1">
    <citation type="submission" date="2008-02" db="EMBL/GenBank/DDBJ databases">
        <title>Complete sequence of Yersinia pseudotuberculosis YPIII.</title>
        <authorList>
            <consortium name="US DOE Joint Genome Institute"/>
            <person name="Copeland A."/>
            <person name="Lucas S."/>
            <person name="Lapidus A."/>
            <person name="Glavina del Rio T."/>
            <person name="Dalin E."/>
            <person name="Tice H."/>
            <person name="Bruce D."/>
            <person name="Goodwin L."/>
            <person name="Pitluck S."/>
            <person name="Munk A.C."/>
            <person name="Brettin T."/>
            <person name="Detter J.C."/>
            <person name="Han C."/>
            <person name="Tapia R."/>
            <person name="Schmutz J."/>
            <person name="Larimer F."/>
            <person name="Land M."/>
            <person name="Hauser L."/>
            <person name="Challacombe J.F."/>
            <person name="Green L."/>
            <person name="Lindler L.E."/>
            <person name="Nikolich M.P."/>
            <person name="Richardson P."/>
        </authorList>
    </citation>
    <scope>NUCLEOTIDE SEQUENCE [LARGE SCALE GENOMIC DNA]</scope>
    <source>
        <strain>YPIII</strain>
    </source>
</reference>
<protein>
    <recommendedName>
        <fullName evidence="1">Ribosomal RNA small subunit methyltransferase B</fullName>
        <ecNumber evidence="1">2.1.1.176</ecNumber>
    </recommendedName>
    <alternativeName>
        <fullName evidence="1">16S rRNA m5C967 methyltransferase</fullName>
    </alternativeName>
    <alternativeName>
        <fullName evidence="1">rRNA (cytosine-C(5)-)-methyltransferase RsmB</fullName>
    </alternativeName>
</protein>